<organism>
    <name type="scientific">Chlorobaculum tepidum (strain ATCC 49652 / DSM 12025 / NBRC 103806 / TLS)</name>
    <name type="common">Chlorobium tepidum</name>
    <dbReference type="NCBI Taxonomy" id="194439"/>
    <lineage>
        <taxon>Bacteria</taxon>
        <taxon>Pseudomonadati</taxon>
        <taxon>Chlorobiota</taxon>
        <taxon>Chlorobiia</taxon>
        <taxon>Chlorobiales</taxon>
        <taxon>Chlorobiaceae</taxon>
        <taxon>Chlorobaculum</taxon>
    </lineage>
</organism>
<proteinExistence type="inferred from homology"/>
<evidence type="ECO:0000255" key="1">
    <source>
        <dbReference type="HAMAP-Rule" id="MF_01855"/>
    </source>
</evidence>
<gene>
    <name evidence="1" type="primary">fbp</name>
    <name type="ordered locus">CT0358</name>
</gene>
<reference key="1">
    <citation type="journal article" date="2002" name="Proc. Natl. Acad. Sci. U.S.A.">
        <title>The complete genome sequence of Chlorobium tepidum TLS, a photosynthetic, anaerobic, green-sulfur bacterium.</title>
        <authorList>
            <person name="Eisen J.A."/>
            <person name="Nelson K.E."/>
            <person name="Paulsen I.T."/>
            <person name="Heidelberg J.F."/>
            <person name="Wu M."/>
            <person name="Dodson R.J."/>
            <person name="DeBoy R.T."/>
            <person name="Gwinn M.L."/>
            <person name="Nelson W.C."/>
            <person name="Haft D.H."/>
            <person name="Hickey E.K."/>
            <person name="Peterson J.D."/>
            <person name="Durkin A.S."/>
            <person name="Kolonay J.F."/>
            <person name="Yang F."/>
            <person name="Holt I.E."/>
            <person name="Umayam L.A."/>
            <person name="Mason T.M."/>
            <person name="Brenner M."/>
            <person name="Shea T.P."/>
            <person name="Parksey D.S."/>
            <person name="Nierman W.C."/>
            <person name="Feldblyum T.V."/>
            <person name="Hansen C.L."/>
            <person name="Craven M.B."/>
            <person name="Radune D."/>
            <person name="Vamathevan J.J."/>
            <person name="Khouri H.M."/>
            <person name="White O."/>
            <person name="Gruber T.M."/>
            <person name="Ketchum K.A."/>
            <person name="Venter J.C."/>
            <person name="Tettelin H."/>
            <person name="Bryant D.A."/>
            <person name="Fraser C.M."/>
        </authorList>
    </citation>
    <scope>NUCLEOTIDE SEQUENCE [LARGE SCALE GENOMIC DNA]</scope>
    <source>
        <strain>ATCC 49652 / DSM 12025 / NBRC 103806 / TLS</strain>
    </source>
</reference>
<name>F16PA_CHLTE</name>
<sequence length="333" mass="37311">MNKLTTIESHFLQLQKRYPEINSEVTDLLNDVAFAAKLVRREVVRAGLADILGLAGSTNVQGEEVKKLDLFANERLINAIGQHGRFAIMGSEENEEIIKPPKFESGEYVLLFDPLDGSSNIDVNVSVGTIFSIYRLKSGEPSQASLEDCLQKGADQIAAGYVIYGSSVMMVYTTGHGVHGFTYDQTVGEFLLSHENITTPEHGKYYSVNEGSWQEFNDGTKRFLDYLKEEDKATGRPYSTRYIGSFVADFHRNLLTGGVFVYPATKKHKNGKLRLMYEANPMAFICEQAGGRATDGYRRILDIEPKELHQRTPLYIGSKNDVLIAEEFEQGKR</sequence>
<accession>Q8KFG8</accession>
<comment type="catalytic activity">
    <reaction evidence="1">
        <text>beta-D-fructose 1,6-bisphosphate + H2O = beta-D-fructose 6-phosphate + phosphate</text>
        <dbReference type="Rhea" id="RHEA:11064"/>
        <dbReference type="ChEBI" id="CHEBI:15377"/>
        <dbReference type="ChEBI" id="CHEBI:32966"/>
        <dbReference type="ChEBI" id="CHEBI:43474"/>
        <dbReference type="ChEBI" id="CHEBI:57634"/>
        <dbReference type="EC" id="3.1.3.11"/>
    </reaction>
</comment>
<comment type="cofactor">
    <cofactor evidence="1">
        <name>Mg(2+)</name>
        <dbReference type="ChEBI" id="CHEBI:18420"/>
    </cofactor>
    <text evidence="1">Binds 2 magnesium ions per subunit.</text>
</comment>
<comment type="pathway">
    <text evidence="1">Carbohydrate biosynthesis; Calvin cycle.</text>
</comment>
<comment type="subunit">
    <text evidence="1">Homotetramer.</text>
</comment>
<comment type="subcellular location">
    <subcellularLocation>
        <location evidence="1">Cytoplasm</location>
    </subcellularLocation>
</comment>
<comment type="similarity">
    <text evidence="1">Belongs to the FBPase class 1 family.</text>
</comment>
<protein>
    <recommendedName>
        <fullName evidence="1">Fructose-1,6-bisphosphatase class 1</fullName>
        <shortName evidence="1">FBPase class 1</shortName>
        <ecNumber evidence="1">3.1.3.11</ecNumber>
    </recommendedName>
    <alternativeName>
        <fullName evidence="1">D-fructose-1,6-bisphosphate 1-phosphohydrolase class 1</fullName>
    </alternativeName>
</protein>
<feature type="chain" id="PRO_0000364525" description="Fructose-1,6-bisphosphatase class 1">
    <location>
        <begin position="1"/>
        <end position="333"/>
    </location>
</feature>
<feature type="binding site" evidence="1">
    <location>
        <position position="92"/>
    </location>
    <ligand>
        <name>Mg(2+)</name>
        <dbReference type="ChEBI" id="CHEBI:18420"/>
        <label>1</label>
    </ligand>
</feature>
<feature type="binding site" evidence="1">
    <location>
        <position position="113"/>
    </location>
    <ligand>
        <name>Mg(2+)</name>
        <dbReference type="ChEBI" id="CHEBI:18420"/>
        <label>1</label>
    </ligand>
</feature>
<feature type="binding site" evidence="1">
    <location>
        <position position="113"/>
    </location>
    <ligand>
        <name>Mg(2+)</name>
        <dbReference type="ChEBI" id="CHEBI:18420"/>
        <label>2</label>
    </ligand>
</feature>
<feature type="binding site" evidence="1">
    <location>
        <position position="115"/>
    </location>
    <ligand>
        <name>Mg(2+)</name>
        <dbReference type="ChEBI" id="CHEBI:18420"/>
        <label>1</label>
    </ligand>
</feature>
<feature type="binding site" evidence="1">
    <location>
        <begin position="116"/>
        <end position="119"/>
    </location>
    <ligand>
        <name>substrate</name>
    </ligand>
</feature>
<feature type="binding site" evidence="1">
    <location>
        <position position="116"/>
    </location>
    <ligand>
        <name>Mg(2+)</name>
        <dbReference type="ChEBI" id="CHEBI:18420"/>
        <label>2</label>
    </ligand>
</feature>
<feature type="binding site" evidence="1">
    <location>
        <position position="209"/>
    </location>
    <ligand>
        <name>substrate</name>
    </ligand>
</feature>
<feature type="binding site" evidence="1">
    <location>
        <position position="242"/>
    </location>
    <ligand>
        <name>substrate</name>
    </ligand>
</feature>
<feature type="binding site" evidence="1">
    <location>
        <position position="272"/>
    </location>
    <ligand>
        <name>substrate</name>
    </ligand>
</feature>
<feature type="binding site" evidence="1">
    <location>
        <position position="278"/>
    </location>
    <ligand>
        <name>Mg(2+)</name>
        <dbReference type="ChEBI" id="CHEBI:18420"/>
        <label>2</label>
    </ligand>
</feature>
<dbReference type="EC" id="3.1.3.11" evidence="1"/>
<dbReference type="EMBL" id="AE006470">
    <property type="protein sequence ID" value="AAM71604.1"/>
    <property type="molecule type" value="Genomic_DNA"/>
</dbReference>
<dbReference type="RefSeq" id="NP_661262.1">
    <property type="nucleotide sequence ID" value="NC_002932.3"/>
</dbReference>
<dbReference type="RefSeq" id="WP_010932050.1">
    <property type="nucleotide sequence ID" value="NC_002932.3"/>
</dbReference>
<dbReference type="SMR" id="Q8KFG8"/>
<dbReference type="STRING" id="194439.CT0358"/>
<dbReference type="EnsemblBacteria" id="AAM71604">
    <property type="protein sequence ID" value="AAM71604"/>
    <property type="gene ID" value="CT0358"/>
</dbReference>
<dbReference type="KEGG" id="cte:CT0358"/>
<dbReference type="PATRIC" id="fig|194439.7.peg.345"/>
<dbReference type="eggNOG" id="COG0158">
    <property type="taxonomic scope" value="Bacteria"/>
</dbReference>
<dbReference type="HOGENOM" id="CLU_039977_2_2_10"/>
<dbReference type="OrthoDB" id="9806756at2"/>
<dbReference type="UniPathway" id="UPA00116"/>
<dbReference type="Proteomes" id="UP000001007">
    <property type="component" value="Chromosome"/>
</dbReference>
<dbReference type="GO" id="GO:0005829">
    <property type="term" value="C:cytosol"/>
    <property type="evidence" value="ECO:0007669"/>
    <property type="project" value="TreeGrafter"/>
</dbReference>
<dbReference type="GO" id="GO:0042132">
    <property type="term" value="F:fructose 1,6-bisphosphate 1-phosphatase activity"/>
    <property type="evidence" value="ECO:0007669"/>
    <property type="project" value="UniProtKB-UniRule"/>
</dbReference>
<dbReference type="GO" id="GO:0000287">
    <property type="term" value="F:magnesium ion binding"/>
    <property type="evidence" value="ECO:0007669"/>
    <property type="project" value="UniProtKB-UniRule"/>
</dbReference>
<dbReference type="GO" id="GO:0030388">
    <property type="term" value="P:fructose 1,6-bisphosphate metabolic process"/>
    <property type="evidence" value="ECO:0007669"/>
    <property type="project" value="TreeGrafter"/>
</dbReference>
<dbReference type="GO" id="GO:0006002">
    <property type="term" value="P:fructose 6-phosphate metabolic process"/>
    <property type="evidence" value="ECO:0007669"/>
    <property type="project" value="TreeGrafter"/>
</dbReference>
<dbReference type="GO" id="GO:0006000">
    <property type="term" value="P:fructose metabolic process"/>
    <property type="evidence" value="ECO:0007669"/>
    <property type="project" value="TreeGrafter"/>
</dbReference>
<dbReference type="GO" id="GO:0006094">
    <property type="term" value="P:gluconeogenesis"/>
    <property type="evidence" value="ECO:0007669"/>
    <property type="project" value="UniProtKB-UniRule"/>
</dbReference>
<dbReference type="GO" id="GO:0019253">
    <property type="term" value="P:reductive pentose-phosphate cycle"/>
    <property type="evidence" value="ECO:0007669"/>
    <property type="project" value="UniProtKB-UniRule"/>
</dbReference>
<dbReference type="GO" id="GO:0005986">
    <property type="term" value="P:sucrose biosynthetic process"/>
    <property type="evidence" value="ECO:0007669"/>
    <property type="project" value="TreeGrafter"/>
</dbReference>
<dbReference type="CDD" id="cd00354">
    <property type="entry name" value="FBPase"/>
    <property type="match status" value="1"/>
</dbReference>
<dbReference type="FunFam" id="3.30.540.10:FF:000002">
    <property type="entry name" value="Fructose-1,6-bisphosphatase class 1"/>
    <property type="match status" value="1"/>
</dbReference>
<dbReference type="FunFam" id="3.40.190.80:FF:000001">
    <property type="entry name" value="Fructose-1,6-bisphosphatase class 1"/>
    <property type="match status" value="1"/>
</dbReference>
<dbReference type="Gene3D" id="3.40.190.80">
    <property type="match status" value="1"/>
</dbReference>
<dbReference type="Gene3D" id="3.30.540.10">
    <property type="entry name" value="Fructose-1,6-Bisphosphatase, subunit A, domain 1"/>
    <property type="match status" value="1"/>
</dbReference>
<dbReference type="HAMAP" id="MF_01855">
    <property type="entry name" value="FBPase_class1"/>
    <property type="match status" value="1"/>
</dbReference>
<dbReference type="InterPro" id="IPR044015">
    <property type="entry name" value="FBPase_C_dom"/>
</dbReference>
<dbReference type="InterPro" id="IPR000146">
    <property type="entry name" value="FBPase_class-1"/>
</dbReference>
<dbReference type="InterPro" id="IPR033391">
    <property type="entry name" value="FBPase_N"/>
</dbReference>
<dbReference type="InterPro" id="IPR028343">
    <property type="entry name" value="FBPtase"/>
</dbReference>
<dbReference type="NCBIfam" id="NF006778">
    <property type="entry name" value="PRK09293.1-1"/>
    <property type="match status" value="1"/>
</dbReference>
<dbReference type="NCBIfam" id="NF006779">
    <property type="entry name" value="PRK09293.1-3"/>
    <property type="match status" value="1"/>
</dbReference>
<dbReference type="PANTHER" id="PTHR11556">
    <property type="entry name" value="FRUCTOSE-1,6-BISPHOSPHATASE-RELATED"/>
    <property type="match status" value="1"/>
</dbReference>
<dbReference type="PANTHER" id="PTHR11556:SF35">
    <property type="entry name" value="SEDOHEPTULOSE-1,7-BISPHOSPHATASE, CHLOROPLASTIC"/>
    <property type="match status" value="1"/>
</dbReference>
<dbReference type="Pfam" id="PF00316">
    <property type="entry name" value="FBPase"/>
    <property type="match status" value="1"/>
</dbReference>
<dbReference type="Pfam" id="PF18913">
    <property type="entry name" value="FBPase_C"/>
    <property type="match status" value="1"/>
</dbReference>
<dbReference type="PIRSF" id="PIRSF500210">
    <property type="entry name" value="FBPtase"/>
    <property type="match status" value="1"/>
</dbReference>
<dbReference type="PIRSF" id="PIRSF000904">
    <property type="entry name" value="FBPtase_SBPase"/>
    <property type="match status" value="1"/>
</dbReference>
<dbReference type="PRINTS" id="PR00115">
    <property type="entry name" value="F16BPHPHTASE"/>
</dbReference>
<dbReference type="SUPFAM" id="SSF56655">
    <property type="entry name" value="Carbohydrate phosphatase"/>
    <property type="match status" value="1"/>
</dbReference>
<keyword id="KW-0113">Calvin cycle</keyword>
<keyword id="KW-0119">Carbohydrate metabolism</keyword>
<keyword id="KW-0963">Cytoplasm</keyword>
<keyword id="KW-0378">Hydrolase</keyword>
<keyword id="KW-0460">Magnesium</keyword>
<keyword id="KW-0479">Metal-binding</keyword>
<keyword id="KW-1185">Reference proteome</keyword>